<comment type="function">
    <text evidence="1 3">Catalyzes the ATP-dependent amidation of deamido-NAD to form NAD. Uses L-glutamine as a nitrogen source.</text>
</comment>
<comment type="catalytic activity">
    <reaction evidence="1">
        <text>deamido-NAD(+) + L-glutamine + ATP + H2O = L-glutamate + AMP + diphosphate + NAD(+) + H(+)</text>
        <dbReference type="Rhea" id="RHEA:24384"/>
        <dbReference type="ChEBI" id="CHEBI:15377"/>
        <dbReference type="ChEBI" id="CHEBI:15378"/>
        <dbReference type="ChEBI" id="CHEBI:29985"/>
        <dbReference type="ChEBI" id="CHEBI:30616"/>
        <dbReference type="ChEBI" id="CHEBI:33019"/>
        <dbReference type="ChEBI" id="CHEBI:57540"/>
        <dbReference type="ChEBI" id="CHEBI:58359"/>
        <dbReference type="ChEBI" id="CHEBI:58437"/>
        <dbReference type="ChEBI" id="CHEBI:456215"/>
        <dbReference type="EC" id="6.3.5.1"/>
    </reaction>
</comment>
<comment type="pathway">
    <text evidence="1">Cofactor biosynthesis; NAD(+) biosynthesis; NAD(+) from deamido-NAD(+) (L-Gln route): step 1/1.</text>
</comment>
<comment type="similarity">
    <text evidence="1 5">In the C-terminal section; belongs to the NAD synthetase family.</text>
</comment>
<dbReference type="EC" id="6.3.5.1" evidence="1"/>
<dbReference type="EMBL" id="X59399">
    <property type="protein sequence ID" value="CAA42042.1"/>
    <property type="molecule type" value="Genomic_DNA"/>
</dbReference>
<dbReference type="PIR" id="S15555">
    <property type="entry name" value="S15555"/>
</dbReference>
<dbReference type="RefSeq" id="WP_013067091.1">
    <property type="nucleotide sequence ID" value="NZ_JAOTPJ010000028.1"/>
</dbReference>
<dbReference type="SMR" id="Q03638"/>
<dbReference type="OMA" id="PICEDIW"/>
<dbReference type="UniPathway" id="UPA00253">
    <property type="reaction ID" value="UER00334"/>
</dbReference>
<dbReference type="GO" id="GO:0005737">
    <property type="term" value="C:cytoplasm"/>
    <property type="evidence" value="ECO:0007669"/>
    <property type="project" value="InterPro"/>
</dbReference>
<dbReference type="GO" id="GO:0005524">
    <property type="term" value="F:ATP binding"/>
    <property type="evidence" value="ECO:0007669"/>
    <property type="project" value="UniProtKB-UniRule"/>
</dbReference>
<dbReference type="GO" id="GO:0004359">
    <property type="term" value="F:glutaminase activity"/>
    <property type="evidence" value="ECO:0007669"/>
    <property type="project" value="InterPro"/>
</dbReference>
<dbReference type="GO" id="GO:0003952">
    <property type="term" value="F:NAD+ synthase (glutamine-hydrolyzing) activity"/>
    <property type="evidence" value="ECO:0007669"/>
    <property type="project" value="UniProtKB-EC"/>
</dbReference>
<dbReference type="GO" id="GO:0008795">
    <property type="term" value="F:NAD+ synthase activity"/>
    <property type="evidence" value="ECO:0007669"/>
    <property type="project" value="UniProtKB-UniRule"/>
</dbReference>
<dbReference type="GO" id="GO:0009435">
    <property type="term" value="P:NAD biosynthetic process"/>
    <property type="evidence" value="ECO:0007669"/>
    <property type="project" value="UniProtKB-UniRule"/>
</dbReference>
<dbReference type="CDD" id="cd07570">
    <property type="entry name" value="GAT_Gln-NAD-synth"/>
    <property type="match status" value="1"/>
</dbReference>
<dbReference type="CDD" id="cd00553">
    <property type="entry name" value="NAD_synthase"/>
    <property type="match status" value="1"/>
</dbReference>
<dbReference type="FunFam" id="3.40.50.620:FF:000106">
    <property type="entry name" value="Glutamine-dependent NAD(+) synthetase"/>
    <property type="match status" value="1"/>
</dbReference>
<dbReference type="Gene3D" id="3.60.110.10">
    <property type="entry name" value="Carbon-nitrogen hydrolase"/>
    <property type="match status" value="1"/>
</dbReference>
<dbReference type="Gene3D" id="3.40.50.620">
    <property type="entry name" value="HUPs"/>
    <property type="match status" value="1"/>
</dbReference>
<dbReference type="HAMAP" id="MF_02090">
    <property type="entry name" value="NadE_glutamine_dep"/>
    <property type="match status" value="1"/>
</dbReference>
<dbReference type="InterPro" id="IPR003010">
    <property type="entry name" value="C-N_Hydrolase"/>
</dbReference>
<dbReference type="InterPro" id="IPR036526">
    <property type="entry name" value="C-N_Hydrolase_sf"/>
</dbReference>
<dbReference type="InterPro" id="IPR014445">
    <property type="entry name" value="Gln-dep_NAD_synthase"/>
</dbReference>
<dbReference type="InterPro" id="IPR022310">
    <property type="entry name" value="NAD/GMP_synthase"/>
</dbReference>
<dbReference type="InterPro" id="IPR003694">
    <property type="entry name" value="NAD_synthase"/>
</dbReference>
<dbReference type="InterPro" id="IPR014729">
    <property type="entry name" value="Rossmann-like_a/b/a_fold"/>
</dbReference>
<dbReference type="NCBIfam" id="TIGR00552">
    <property type="entry name" value="nadE"/>
    <property type="match status" value="1"/>
</dbReference>
<dbReference type="NCBIfam" id="NF010588">
    <property type="entry name" value="PRK13981.1"/>
    <property type="match status" value="1"/>
</dbReference>
<dbReference type="PANTHER" id="PTHR23090:SF9">
    <property type="entry name" value="GLUTAMINE-DEPENDENT NAD(+) SYNTHETASE"/>
    <property type="match status" value="1"/>
</dbReference>
<dbReference type="PANTHER" id="PTHR23090">
    <property type="entry name" value="NH 3 /GLUTAMINE-DEPENDENT NAD + SYNTHETASE"/>
    <property type="match status" value="1"/>
</dbReference>
<dbReference type="Pfam" id="PF00795">
    <property type="entry name" value="CN_hydrolase"/>
    <property type="match status" value="1"/>
</dbReference>
<dbReference type="Pfam" id="PF02540">
    <property type="entry name" value="NAD_synthase"/>
    <property type="match status" value="1"/>
</dbReference>
<dbReference type="PIRSF" id="PIRSF006630">
    <property type="entry name" value="NADS_GAT"/>
    <property type="match status" value="1"/>
</dbReference>
<dbReference type="SUPFAM" id="SSF52402">
    <property type="entry name" value="Adenine nucleotide alpha hydrolases-like"/>
    <property type="match status" value="1"/>
</dbReference>
<dbReference type="SUPFAM" id="SSF56317">
    <property type="entry name" value="Carbon-nitrogen hydrolase"/>
    <property type="match status" value="1"/>
</dbReference>
<dbReference type="PROSITE" id="PS50263">
    <property type="entry name" value="CN_HYDROLASE"/>
    <property type="match status" value="1"/>
</dbReference>
<evidence type="ECO:0000255" key="1">
    <source>
        <dbReference type="HAMAP-Rule" id="MF_02090"/>
    </source>
</evidence>
<evidence type="ECO:0000255" key="2">
    <source>
        <dbReference type="PROSITE-ProRule" id="PRU00054"/>
    </source>
</evidence>
<evidence type="ECO:0000269" key="3">
    <source>
    </source>
</evidence>
<evidence type="ECO:0000303" key="4">
    <source>
    </source>
</evidence>
<evidence type="ECO:0000305" key="5"/>
<accession>Q03638</accession>
<organism>
    <name type="scientific">Rhodobacter capsulatus</name>
    <name type="common">Rhodopseudomonas capsulata</name>
    <dbReference type="NCBI Taxonomy" id="1061"/>
    <lineage>
        <taxon>Bacteria</taxon>
        <taxon>Pseudomonadati</taxon>
        <taxon>Pseudomonadota</taxon>
        <taxon>Alphaproteobacteria</taxon>
        <taxon>Rhodobacterales</taxon>
        <taxon>Rhodobacter group</taxon>
        <taxon>Rhodobacter</taxon>
    </lineage>
</organism>
<keyword id="KW-0067">ATP-binding</keyword>
<keyword id="KW-0378">Hydrolase</keyword>
<keyword id="KW-0436">Ligase</keyword>
<keyword id="KW-0520">NAD</keyword>
<keyword id="KW-0547">Nucleotide-binding</keyword>
<name>NADE_RHOCA</name>
<sequence length="552" mass="59706">MTDRFRITLAQLNPTVGALAANAEKAMAAWQAGRAAGADLVALPEMFLTGYQTQDLVLKPAFLRDAMAAMAALAAQVVDGPALGIGGPYVDETGSYNAWWVLKDGRVIARALKHHLPHDDVFDEMRLFDQGPVSDPLRLGPVALGVPVCEDAWHPDVAGALAAAGAEVLMVPNGSPYRRGKLDLRRQVTGARVAETGLPLLYLNMVGGQDDQLFDGASFVLNPDGSVAVQLPAFEEAVVHVDLERGAADWRAVPADIVAPPGDIEQDYRAMVLGLQDYLRKSGFSRVVLGLSGGIDSALVAVIAADALGAGNVHCVMLPSRYTSQGSLDDAADLARRLGARLDTVEIEGPRAAVEGALAHVLAGTAPDVTEENIQSRLRGVILMAISNKFGAMLLTTGNKSEVAVGYCTIYGDMAGGYNPLKDLYKTRVFETCRWRNATHRPWMQAPAGEIIPVAIIDKPPSAELRENQTDQDSLPPYEVLDAILERLVEGDQSVDQIVAAGFDRATVKRIEHLLYISEWKRFQSAPGPRLTTRAFWLDRRYPMVNRWRDQS</sequence>
<feature type="chain" id="PRO_0000152243" description="Glutamine-dependent NAD(+) synthetase">
    <location>
        <begin position="1"/>
        <end position="552"/>
    </location>
</feature>
<feature type="domain" description="CN hydrolase" evidence="2">
    <location>
        <begin position="5"/>
        <end position="245"/>
    </location>
</feature>
<feature type="region of interest" description="Ligase">
    <location>
        <begin position="275"/>
        <end position="552"/>
    </location>
</feature>
<feature type="active site" description="Proton acceptor; for glutaminase activity" evidence="1">
    <location>
        <position position="45"/>
    </location>
</feature>
<feature type="active site" description="For glutaminase activity" evidence="1">
    <location>
        <position position="113"/>
    </location>
</feature>
<feature type="active site" description="Nucleophile; for glutaminase activity" evidence="1">
    <location>
        <position position="149"/>
    </location>
</feature>
<feature type="binding site" evidence="1">
    <location>
        <position position="175"/>
    </location>
    <ligand>
        <name>L-glutamine</name>
        <dbReference type="ChEBI" id="CHEBI:58359"/>
    </ligand>
</feature>
<feature type="binding site" evidence="1">
    <location>
        <position position="181"/>
    </location>
    <ligand>
        <name>L-glutamine</name>
        <dbReference type="ChEBI" id="CHEBI:58359"/>
    </ligand>
</feature>
<feature type="binding site" evidence="1">
    <location>
        <begin position="290"/>
        <end position="297"/>
    </location>
    <ligand>
        <name>ATP</name>
        <dbReference type="ChEBI" id="CHEBI:30616"/>
    </ligand>
</feature>
<feature type="binding site" evidence="1">
    <location>
        <position position="373"/>
    </location>
    <ligand>
        <name>deamido-NAD(+)</name>
        <dbReference type="ChEBI" id="CHEBI:58437"/>
    </ligand>
</feature>
<feature type="binding site" evidence="1">
    <location>
        <position position="397"/>
    </location>
    <ligand>
        <name>ATP</name>
        <dbReference type="ChEBI" id="CHEBI:30616"/>
    </ligand>
</feature>
<feature type="binding site" evidence="1">
    <location>
        <position position="402"/>
    </location>
    <ligand>
        <name>deamido-NAD(+)</name>
        <dbReference type="ChEBI" id="CHEBI:58437"/>
    </ligand>
</feature>
<feature type="binding site" evidence="1">
    <location>
        <position position="521"/>
    </location>
    <ligand>
        <name>deamido-NAD(+)</name>
        <dbReference type="ChEBI" id="CHEBI:58437"/>
    </ligand>
</feature>
<protein>
    <recommendedName>
        <fullName evidence="1">Glutamine-dependent NAD(+) synthetase</fullName>
        <ecNumber evidence="1">6.3.5.1</ecNumber>
    </recommendedName>
    <alternativeName>
        <fullName evidence="1">NAD(+) synthase [glutamine-hydrolyzing]</fullName>
    </alternativeName>
</protein>
<proteinExistence type="evidence at protein level"/>
<reference key="1">
    <citation type="journal article" date="1993" name="FEMS Microbiol. Rev.">
        <title>Biochemical genetics revisited: the use of mutants to study carbon and nitrogen metabolism in the photosynthetic bacteria.</title>
        <authorList>
            <person name="Willison J.C."/>
        </authorList>
    </citation>
    <scope>NUCLEOTIDE SEQUENCE [GENOMIC DNA]</scope>
    <source>
        <strain>ATCC 33303 / B10</strain>
    </source>
</reference>
<reference key="2">
    <citation type="journal article" date="1994" name="J. Bacteriol.">
        <title>The Escherichia coli efg gene and the Rhodobacter capsulatus adgA gene code for NH3-dependent NAD synthetase.</title>
        <authorList>
            <person name="Willison J.C."/>
            <person name="Tissot G."/>
        </authorList>
    </citation>
    <scope>FUNCTION AS A NAD SYNTHASE</scope>
</reference>
<gene>
    <name evidence="1 4" type="primary">nadE</name>
    <name evidence="4" type="synonym">adgA</name>
</gene>